<name>MSA2_PLAF1</name>
<proteinExistence type="inferred from homology"/>
<comment type="function">
    <text evidence="4">May play a role in the merozoite attachment to the erythrocyte.</text>
</comment>
<comment type="subcellular location">
    <subcellularLocation>
        <location evidence="4">Cell membrane</location>
        <topology evidence="2">Lipid-anchor</topology>
        <topology evidence="2">GPI-anchor</topology>
    </subcellularLocation>
    <text evidence="4">During host erythrocyte invasion by merozoites, carried into invaded erythrocytes where it is rapidly degraded.</text>
</comment>
<comment type="domain">
    <text evidence="4">The N-terminal region appears to be involved in lipid binding.</text>
</comment>
<comment type="polymorphism">
    <text evidence="7">The sequence varies across Plasmodium strains (PubMed:1542312). All variants share conserved N- and C-terminal regions; however, they belong to two allelic families, represented by 3D7 strain and FC27 strain sequences respectively, distinguished by tandem repeats and dimorphic flanking sequences within the central region of the protein (PubMed:1542312).</text>
</comment>
<feature type="signal peptide" evidence="5">
    <location>
        <begin position="1"/>
        <end position="20"/>
    </location>
</feature>
<feature type="chain" id="PRO_0000024578" description="Merozoite surface protein 2">
    <location>
        <begin position="21"/>
        <end position="260"/>
    </location>
</feature>
<feature type="propeptide" id="PRO_0000024579" description="Removed in mature form" evidence="2">
    <location>
        <begin position="261"/>
        <end position="286"/>
    </location>
</feature>
<feature type="repeat" description="1" evidence="7">
    <location>
        <begin position="59"/>
        <end position="68"/>
    </location>
</feature>
<feature type="repeat" description="2; partial" evidence="7">
    <location>
        <begin position="69"/>
        <end position="76"/>
    </location>
</feature>
<feature type="repeat" description="3" evidence="7">
    <location>
        <begin position="77"/>
        <end position="86"/>
    </location>
</feature>
<feature type="repeat" description="4" evidence="7">
    <location>
        <begin position="88"/>
        <end position="96"/>
    </location>
</feature>
<feature type="repeat" description="5" evidence="7">
    <location>
        <begin position="97"/>
        <end position="106"/>
    </location>
</feature>
<feature type="region of interest" description="Disordered" evidence="6">
    <location>
        <begin position="43"/>
        <end position="248"/>
    </location>
</feature>
<feature type="region of interest" description="Polymorphic region" evidence="7">
    <location>
        <begin position="44"/>
        <end position="212"/>
    </location>
</feature>
<feature type="region of interest" description="5 X 10 AA tandem repeats of S-G-S-A-[GS]-[GS]-[AD]-G-A" evidence="7">
    <location>
        <begin position="59"/>
        <end position="106"/>
    </location>
</feature>
<feature type="compositionally biased region" description="Gly residues" evidence="6">
    <location>
        <begin position="54"/>
        <end position="68"/>
    </location>
</feature>
<feature type="compositionally biased region" description="Low complexity" evidence="6">
    <location>
        <begin position="69"/>
        <end position="137"/>
    </location>
</feature>
<feature type="compositionally biased region" description="Polar residues" evidence="6">
    <location>
        <begin position="153"/>
        <end position="179"/>
    </location>
</feature>
<feature type="compositionally biased region" description="Polar residues" evidence="6">
    <location>
        <begin position="186"/>
        <end position="214"/>
    </location>
</feature>
<feature type="compositionally biased region" description="Basic and acidic residues" evidence="6">
    <location>
        <begin position="239"/>
        <end position="248"/>
    </location>
</feature>
<feature type="lipid moiety-binding region" description="GPI-anchor amidated asparagine" evidence="1">
    <location>
        <position position="260"/>
    </location>
</feature>
<feature type="glycosylation site" description="N-linked (GlcNAc...) asparagine" evidence="5">
    <location>
        <position position="22"/>
    </location>
</feature>
<feature type="glycosylation site" description="N-linked (GlcNAc...) asparagine" evidence="5">
    <location>
        <position position="36"/>
    </location>
</feature>
<feature type="glycosylation site" description="N-linked (GlcNAc...) asparagine" evidence="5">
    <location>
        <position position="163"/>
    </location>
</feature>
<feature type="glycosylation site" description="N-linked (GlcNAc...) asparagine" evidence="5">
    <location>
        <position position="235"/>
    </location>
</feature>
<feature type="glycosylation site" description="N-linked (GlcNAc...) asparagine" evidence="5">
    <location>
        <position position="259"/>
    </location>
</feature>
<feature type="glycosylation site" description="N-linked (GlcNAc...) asparagine" evidence="5">
    <location>
        <position position="260"/>
    </location>
</feature>
<feature type="disulfide bond" evidence="3">
    <location>
        <begin position="243"/>
        <end position="251"/>
    </location>
</feature>
<sequence length="286" mass="28844">MKVIKTLSIINFFIFVTFNIKNESKYSNTFINNAYNMSIRRSMTESKTPTPTGAGAGASGSAGSGDGASGSASGSASGSASGSAGASGSASGSAGASGSASGSAGAEGSPSTPATTTTTTTTNDAEASTSTSSENPNHNNAKTNPKGNGGVQKPNQANKETQNNSNVQQDSQTKSNVPPTQDADTKSPTAQPEQAENSAPTAEQTESPELQSAPENKGTGQHGHMHGSRNNHPQNTSDSQKECTDGNKENCGAATSLLNNSSNIASINKFVVLISATLVLSFAIFI</sequence>
<protein>
    <recommendedName>
        <fullName evidence="4">Merozoite surface protein 2</fullName>
    </recommendedName>
    <alternativeName>
        <fullName evidence="8">Merozoite surface antigen 2</fullName>
        <shortName evidence="8">MSA-2</shortName>
    </alternativeName>
</protein>
<gene>
    <name evidence="4" type="primary">MSP2</name>
    <name evidence="8" type="synonym">MSA2</name>
</gene>
<keyword id="KW-1003">Cell membrane</keyword>
<keyword id="KW-1015">Disulfide bond</keyword>
<keyword id="KW-0325">Glycoprotein</keyword>
<keyword id="KW-0336">GPI-anchor</keyword>
<keyword id="KW-0449">Lipoprotein</keyword>
<keyword id="KW-0461">Malaria</keyword>
<keyword id="KW-0472">Membrane</keyword>
<keyword id="KW-0477">Merozoite</keyword>
<keyword id="KW-0677">Repeat</keyword>
<keyword id="KW-0732">Signal</keyword>
<evidence type="ECO:0000250" key="1"/>
<evidence type="ECO:0000250" key="2">
    <source>
        <dbReference type="UniProtKB" id="P19260"/>
    </source>
</evidence>
<evidence type="ECO:0000250" key="3">
    <source>
        <dbReference type="UniProtKB" id="P19599"/>
    </source>
</evidence>
<evidence type="ECO:0000250" key="4">
    <source>
        <dbReference type="UniProtKB" id="P50498"/>
    </source>
</evidence>
<evidence type="ECO:0000255" key="5"/>
<evidence type="ECO:0000256" key="6">
    <source>
        <dbReference type="SAM" id="MobiDB-lite"/>
    </source>
</evidence>
<evidence type="ECO:0000269" key="7">
    <source>
    </source>
</evidence>
<evidence type="ECO:0000303" key="8">
    <source>
    </source>
</evidence>
<accession>P50496</accession>
<reference key="1">
    <citation type="journal article" date="1992" name="Mol. Biochem. Parasitol.">
        <title>Two novel alleles within subfamilies of the merozoite surface antigen 2 (MSA-2) of Plasmodium falciparum.</title>
        <authorList>
            <person name="Marshall V.M."/>
            <person name="Coppel R.L."/>
            <person name="Anders R.F."/>
            <person name="Kemp D.J."/>
        </authorList>
    </citation>
    <scope>NUCLEOTIDE SEQUENCE [GENOMIC DNA]</scope>
    <scope>POLYMORPHISM</scope>
    <scope>REPEATS</scope>
</reference>
<organism>
    <name type="scientific">Plasmodium falciparum (isolate 311)</name>
    <dbReference type="NCBI Taxonomy" id="57265"/>
    <lineage>
        <taxon>Eukaryota</taxon>
        <taxon>Sar</taxon>
        <taxon>Alveolata</taxon>
        <taxon>Apicomplexa</taxon>
        <taxon>Aconoidasida</taxon>
        <taxon>Haemosporida</taxon>
        <taxon>Plasmodiidae</taxon>
        <taxon>Plasmodium</taxon>
        <taxon>Plasmodium (Laverania)</taxon>
    </lineage>
</organism>
<dbReference type="EMBL" id="M73809">
    <property type="protein sequence ID" value="AAA29697.1"/>
    <property type="molecule type" value="Genomic_DNA"/>
</dbReference>
<dbReference type="BMRB" id="P50496"/>
<dbReference type="GlyCosmos" id="P50496">
    <property type="glycosylation" value="6 sites, No reported glycans"/>
</dbReference>
<dbReference type="GO" id="GO:0005886">
    <property type="term" value="C:plasma membrane"/>
    <property type="evidence" value="ECO:0007669"/>
    <property type="project" value="UniProtKB-SubCell"/>
</dbReference>
<dbReference type="GO" id="GO:0098552">
    <property type="term" value="C:side of membrane"/>
    <property type="evidence" value="ECO:0007669"/>
    <property type="project" value="UniProtKB-KW"/>
</dbReference>
<dbReference type="GO" id="GO:0007155">
    <property type="term" value="P:cell adhesion"/>
    <property type="evidence" value="ECO:0007669"/>
    <property type="project" value="InterPro"/>
</dbReference>
<dbReference type="InterPro" id="IPR001136">
    <property type="entry name" value="MSA2"/>
</dbReference>
<dbReference type="Pfam" id="PF00985">
    <property type="entry name" value="MSA_2"/>
    <property type="match status" value="1"/>
</dbReference>
<dbReference type="PIRSF" id="PIRSF003575">
    <property type="entry name" value="MSA_2"/>
    <property type="match status" value="1"/>
</dbReference>